<evidence type="ECO:0000250" key="1"/>
<evidence type="ECO:0000256" key="2">
    <source>
        <dbReference type="SAM" id="MobiDB-lite"/>
    </source>
</evidence>
<evidence type="ECO:0000269" key="3">
    <source>
    </source>
</evidence>
<evidence type="ECO:0000269" key="4">
    <source>
    </source>
</evidence>
<evidence type="ECO:0000269" key="5">
    <source>
    </source>
</evidence>
<evidence type="ECO:0000269" key="6">
    <source>
    </source>
</evidence>
<evidence type="ECO:0000305" key="7"/>
<sequence length="238" mass="26905">MEMTDFELTSNSQSNLAIPTNFKSTLPPRKRAKTKEEKEQRRIERILRNRRAAHQSREKKRLHLQYLERKCSLLENLLNSVNLEKLADHEDALTCSHDAFVASLDEYRDFQSTRGASLDTRASSHSSSDTFTPSPLNCTMEPATLSPKSMRDSASDQETSWELQMFKTENVPESTTLPAVDNNNLFDAVASPLADPLCDDIAGNSLPFDNSIDLDNWRNPEAQSGLNSFELNDFFITS</sequence>
<proteinExistence type="evidence at protein level"/>
<dbReference type="EMBL" id="D26506">
    <property type="protein sequence ID" value="BAA05513.1"/>
    <property type="status" value="ALT_FRAME"/>
    <property type="molecule type" value="Genomic_DNA"/>
</dbReference>
<dbReference type="EMBL" id="D50617">
    <property type="protein sequence ID" value="BAA24425.1"/>
    <property type="molecule type" value="Genomic_DNA"/>
</dbReference>
<dbReference type="EMBL" id="D86413">
    <property type="protein sequence ID" value="BAA19565.1"/>
    <property type="molecule type" value="Genomic_DNA"/>
</dbReference>
<dbReference type="EMBL" id="BK006940">
    <property type="protein sequence ID" value="DAA12409.1"/>
    <property type="molecule type" value="Genomic_DNA"/>
</dbReference>
<dbReference type="PIR" id="S78571">
    <property type="entry name" value="S78571"/>
</dbReference>
<dbReference type="RefSeq" id="NP_116622.1">
    <molecule id="P41546-2"/>
    <property type="nucleotide sequence ID" value="NM_001179935.1"/>
</dbReference>
<dbReference type="SMR" id="P41546"/>
<dbReference type="BioGRID" id="31115">
    <property type="interactions" value="472"/>
</dbReference>
<dbReference type="DIP" id="DIP-2203N"/>
<dbReference type="FunCoup" id="P41546">
    <property type="interactions" value="1334"/>
</dbReference>
<dbReference type="IntAct" id="P41546">
    <property type="interactions" value="3"/>
</dbReference>
<dbReference type="STRING" id="4932.YFL031W"/>
<dbReference type="iPTMnet" id="P41546"/>
<dbReference type="PaxDb" id="4932-YFL031W"/>
<dbReference type="PeptideAtlas" id="P41546"/>
<dbReference type="EnsemblFungi" id="YFL031W_mRNA">
    <molecule id="P41546-2"/>
    <property type="protein sequence ID" value="YFL031W"/>
    <property type="gene ID" value="YFL031W"/>
</dbReference>
<dbReference type="GeneID" id="850513"/>
<dbReference type="KEGG" id="sce:YFL031W"/>
<dbReference type="AGR" id="SGD:S000001863"/>
<dbReference type="SGD" id="S000001863">
    <property type="gene designation" value="HAC1"/>
</dbReference>
<dbReference type="VEuPathDB" id="FungiDB:YFL031W"/>
<dbReference type="eggNOG" id="ENOG502S526">
    <property type="taxonomic scope" value="Eukaryota"/>
</dbReference>
<dbReference type="HOGENOM" id="CLU_075866_0_0_1"/>
<dbReference type="InParanoid" id="P41546"/>
<dbReference type="OMA" id="CTMEPAT"/>
<dbReference type="OrthoDB" id="674948at2759"/>
<dbReference type="BioCyc" id="YEAST:G3O-30430-MONOMER"/>
<dbReference type="BioGRID-ORCS" id="850513">
    <property type="hits" value="3 hits in 13 CRISPR screens"/>
</dbReference>
<dbReference type="PRO" id="PR:P41546"/>
<dbReference type="Proteomes" id="UP000002311">
    <property type="component" value="Chromosome VI"/>
</dbReference>
<dbReference type="RNAct" id="P41546">
    <property type="molecule type" value="protein"/>
</dbReference>
<dbReference type="GO" id="GO:0005634">
    <property type="term" value="C:nucleus"/>
    <property type="evidence" value="ECO:0000314"/>
    <property type="project" value="SGD"/>
</dbReference>
<dbReference type="GO" id="GO:0003677">
    <property type="term" value="F:DNA binding"/>
    <property type="evidence" value="ECO:0007669"/>
    <property type="project" value="UniProtKB-KW"/>
</dbReference>
<dbReference type="GO" id="GO:0000981">
    <property type="term" value="F:DNA-binding transcription factor activity, RNA polymerase II-specific"/>
    <property type="evidence" value="ECO:0000314"/>
    <property type="project" value="SGD"/>
</dbReference>
<dbReference type="GO" id="GO:0030968">
    <property type="term" value="P:endoplasmic reticulum unfolded protein response"/>
    <property type="evidence" value="ECO:0000315"/>
    <property type="project" value="SGD"/>
</dbReference>
<dbReference type="GO" id="GO:0051321">
    <property type="term" value="P:meiotic cell cycle"/>
    <property type="evidence" value="ECO:0000314"/>
    <property type="project" value="SGD"/>
</dbReference>
<dbReference type="GO" id="GO:0000122">
    <property type="term" value="P:negative regulation of transcription by RNA polymerase II"/>
    <property type="evidence" value="ECO:0000314"/>
    <property type="project" value="SGD"/>
</dbReference>
<dbReference type="GO" id="GO:0045944">
    <property type="term" value="P:positive regulation of transcription by RNA polymerase II"/>
    <property type="evidence" value="ECO:0000314"/>
    <property type="project" value="SGD"/>
</dbReference>
<dbReference type="GO" id="GO:0034976">
    <property type="term" value="P:response to endoplasmic reticulum stress"/>
    <property type="evidence" value="ECO:0000315"/>
    <property type="project" value="SGD"/>
</dbReference>
<dbReference type="CDD" id="cd14710">
    <property type="entry name" value="bZIP_HAC1-like"/>
    <property type="match status" value="1"/>
</dbReference>
<dbReference type="Gene3D" id="1.20.5.170">
    <property type="match status" value="1"/>
</dbReference>
<dbReference type="InterPro" id="IPR004827">
    <property type="entry name" value="bZIP"/>
</dbReference>
<dbReference type="InterPro" id="IPR046347">
    <property type="entry name" value="bZIP_sf"/>
</dbReference>
<dbReference type="InterPro" id="IPR044280">
    <property type="entry name" value="Hac1/HY5"/>
</dbReference>
<dbReference type="PANTHER" id="PTHR46714">
    <property type="entry name" value="TRANSCRIPTIONAL ACTIVATOR HAC1"/>
    <property type="match status" value="1"/>
</dbReference>
<dbReference type="PANTHER" id="PTHR46714:SF6">
    <property type="entry name" value="TRANSCRIPTIONAL ACTIVATOR HAC1"/>
    <property type="match status" value="1"/>
</dbReference>
<dbReference type="Pfam" id="PF07716">
    <property type="entry name" value="bZIP_2"/>
    <property type="match status" value="1"/>
</dbReference>
<dbReference type="SUPFAM" id="SSF57959">
    <property type="entry name" value="Leucine zipper domain"/>
    <property type="match status" value="1"/>
</dbReference>
<dbReference type="PROSITE" id="PS00036">
    <property type="entry name" value="BZIP_BASIC"/>
    <property type="match status" value="1"/>
</dbReference>
<comment type="function">
    <text>Transcriptional activator involved in the unfolded protein response (UPR) pathway. Recognizes and binds to the UPR element (UPRE) in the promoter of UPR-regulated genes such as KAR2, PDI1, EUG1 and FKB2. Increases the synthesis of endoplasmic reticulum-resident proteins required for protein folding as well as components of the secretory pathway.</text>
</comment>
<comment type="subunit">
    <text>Homodimer.</text>
</comment>
<comment type="subcellular location">
    <subcellularLocation>
        <location evidence="4">Nucleus</location>
    </subcellularLocation>
</comment>
<comment type="alternative products">
    <event type="alternative splicing"/>
    <isoform>
        <id>P41546-2</id>
        <name>I</name>
        <name>Induced</name>
        <sequence type="displayed"/>
    </isoform>
    <isoform>
        <id>P41546-1</id>
        <name>U</name>
        <name>Uninduced</name>
        <sequence type="described" ref="VSP_020905"/>
    </isoform>
    <text>Splicing occurs by a non-spliceosomal, regulated splicing mechanism. When UPR is induced, the mRNA is cleaved by bifunctional transmembrane kinase/endoribonuclease IRE1 and the exons are joined by tRNA ligase TRL1.</text>
</comment>
<comment type="induction">
    <text evidence="3 6">By the unfolded protein response pathway. Accumulation of unfolded proteins in the ER leads to activation of IRE1, which initiates splicing of the untranslated HAC1 precursor mRNA to produce the mature form.</text>
</comment>
<comment type="miscellaneous">
    <text evidence="5">Present with 8970 molecules/cell in log phase SD medium.</text>
</comment>
<comment type="miscellaneous">
    <molecule>Isoform I</molecule>
    <text>Induced and active isoform.</text>
</comment>
<comment type="miscellaneous">
    <molecule>Isoform U</molecule>
    <text evidence="7">Not translated. The unspliced HAC1 mRNA is stable, located in the cytoplasm, and is associated with polyribosomes, yet does not produce protein. Translational attenuation is due to basepairing of the intron with the 5'-UTR of the mRNA.</text>
</comment>
<comment type="similarity">
    <text evidence="7">Belongs to the bZIP family.</text>
</comment>
<comment type="sequence caution" evidence="7">
    <conflict type="frameshift">
        <sequence resource="EMBL-CDS" id="BAA05513"/>
    </conflict>
</comment>
<reference key="1">
    <citation type="journal article" date="1994" name="Nucleic Acids Res.">
        <title>Hac1: a novel yeast bZIP protein binding to the CRE motif is a multicopy suppressor for cdc10 mutant of Schizosaccharomyces pombe.</title>
        <authorList>
            <person name="Nojima H."/>
            <person name="Leem S.-H."/>
            <person name="Araki H."/>
            <person name="Sakai A."/>
            <person name="Nakashima N."/>
            <person name="Kanaoka Y."/>
            <person name="Ono Y."/>
        </authorList>
    </citation>
    <scope>NUCLEOTIDE SEQUENCE [GENOMIC DNA]</scope>
    <source>
        <strain>ATCC 204508 / S288c</strain>
    </source>
</reference>
<reference key="2">
    <citation type="journal article" date="1995" name="Nat. Genet.">
        <title>Analysis of the nucleotide sequence of chromosome VI from Saccharomyces cerevisiae.</title>
        <authorList>
            <person name="Murakami Y."/>
            <person name="Naitou M."/>
            <person name="Hagiwara H."/>
            <person name="Shibata T."/>
            <person name="Ozawa M."/>
            <person name="Sasanuma S."/>
            <person name="Sasanuma M."/>
            <person name="Tsuchiya Y."/>
            <person name="Soeda E."/>
            <person name="Yokoyama K."/>
            <person name="Yamazaki M."/>
            <person name="Tashiro H."/>
            <person name="Eki T."/>
        </authorList>
    </citation>
    <scope>NUCLEOTIDE SEQUENCE [LARGE SCALE GENOMIC DNA]</scope>
    <source>
        <strain>ATCC 204508 / S288c</strain>
    </source>
</reference>
<reference key="3">
    <citation type="submission" date="1998-01" db="EMBL/GenBank/DDBJ databases">
        <authorList>
            <person name="Murakami Y."/>
        </authorList>
    </citation>
    <scope>SEQUENCE REVISION TO 192-238</scope>
</reference>
<reference key="4">
    <citation type="journal article" date="2014" name="G3 (Bethesda)">
        <title>The reference genome sequence of Saccharomyces cerevisiae: Then and now.</title>
        <authorList>
            <person name="Engel S.R."/>
            <person name="Dietrich F.S."/>
            <person name="Fisk D.G."/>
            <person name="Binkley G."/>
            <person name="Balakrishnan R."/>
            <person name="Costanzo M.C."/>
            <person name="Dwight S.S."/>
            <person name="Hitz B.C."/>
            <person name="Karra K."/>
            <person name="Nash R.S."/>
            <person name="Weng S."/>
            <person name="Wong E.D."/>
            <person name="Lloyd P."/>
            <person name="Skrzypek M.S."/>
            <person name="Miyasato S.R."/>
            <person name="Simison M."/>
            <person name="Cherry J.M."/>
        </authorList>
    </citation>
    <scope>GENOME REANNOTATION</scope>
    <source>
        <strain>ATCC 204508 / S288c</strain>
    </source>
</reference>
<reference key="5">
    <citation type="journal article" date="1996" name="Genes Cells">
        <title>Signalling from endoplasmic reticulum to nucleus: transcription factor with a basic-leucine zipper motif is required for the unfolded protein-response pathway.</title>
        <authorList>
            <person name="Mori K."/>
            <person name="Kawahara T."/>
            <person name="Yoshida H."/>
            <person name="Yanagi H."/>
            <person name="Yura T."/>
        </authorList>
    </citation>
    <scope>NUCLEOTIDE SEQUENCE [GENOMIC DNA]</scope>
    <source>
        <strain>ATCC 204510 / AB320</strain>
    </source>
</reference>
<reference key="6">
    <citation type="journal article" date="1996" name="Nucleic Acids Res.">
        <title>Saccharomyces cerevisiae IRE2/HAC1 is involved in IRE1-mediated KAR2 expression.</title>
        <authorList>
            <person name="Nikawa J."/>
            <person name="Akiyoshi M."/>
            <person name="Hirata S."/>
            <person name="Fukuda T."/>
        </authorList>
    </citation>
    <scope>CHARACTERIZATION</scope>
</reference>
<reference key="7">
    <citation type="journal article" date="1996" name="Cell">
        <title>A novel mechanism for regulating activity of a transcription factor that controls the unfolded protein response.</title>
        <authorList>
            <person name="Cox J.S."/>
            <person name="Walter P."/>
        </authorList>
    </citation>
    <scope>CHARACTERIZATION</scope>
    <scope>ALTERNATIVE SPLICING</scope>
</reference>
<reference key="8">
    <citation type="journal article" date="1996" name="Cell">
        <title>tRNA ligase is required for regulated mRNA splicing in the unfolded protein response.</title>
        <authorList>
            <person name="Sidrauski C."/>
            <person name="Cox J.S."/>
            <person name="Walter P."/>
        </authorList>
    </citation>
    <scope>ALTERNATIVE SPLICING</scope>
    <scope>MRNA LIGATION BY TRL1</scope>
</reference>
<reference key="9">
    <citation type="journal article" date="1997" name="Cell">
        <title>The transmembrane kinase Ire1p is a site-specific endonuclease that initiates mRNA splicing in the unfolded protein response.</title>
        <authorList>
            <person name="Sidrauski C."/>
            <person name="Walter P."/>
        </authorList>
    </citation>
    <scope>ALTERNATIVE SPLICING</scope>
    <scope>MRNA CLEAVAGE BY IRE1</scope>
</reference>
<reference key="10">
    <citation type="journal article" date="1997" name="Mol. Biol. Cell">
        <title>Endoplasmic reticulum stress-induced mRNA splicing permits synthesis of transcription factor Hac1p/Ern4p that activates the unfolded protein response.</title>
        <authorList>
            <person name="Kawahara T."/>
            <person name="Yanagi H."/>
            <person name="Yura T."/>
            <person name="Mori K."/>
        </authorList>
    </citation>
    <scope>ALTERNATIVE SPLICING</scope>
    <scope>INDUCTION</scope>
</reference>
<reference key="11">
    <citation type="journal article" date="2001" name="Cell">
        <title>Block of HAC1 mRNA translation by long-range base pairing is released by cytoplasmic splicing upon induction of the unfolded protein response.</title>
        <authorList>
            <person name="Rueegsegger U."/>
            <person name="Leber J.H."/>
            <person name="Walter P."/>
        </authorList>
    </citation>
    <scope>ALTERNATIVE SPLICING</scope>
    <scope>INDUCTION</scope>
</reference>
<reference key="12">
    <citation type="journal article" date="2003" name="Nature">
        <title>Global analysis of protein localization in budding yeast.</title>
        <authorList>
            <person name="Huh W.-K."/>
            <person name="Falvo J.V."/>
            <person name="Gerke L.C."/>
            <person name="Carroll A.S."/>
            <person name="Howson R.W."/>
            <person name="Weissman J.S."/>
            <person name="O'Shea E.K."/>
        </authorList>
    </citation>
    <scope>SUBCELLULAR LOCATION [LARGE SCALE ANALYSIS]</scope>
</reference>
<reference key="13">
    <citation type="journal article" date="2003" name="Nature">
        <title>Global analysis of protein expression in yeast.</title>
        <authorList>
            <person name="Ghaemmaghami S."/>
            <person name="Huh W.-K."/>
            <person name="Bower K."/>
            <person name="Howson R.W."/>
            <person name="Belle A."/>
            <person name="Dephoure N."/>
            <person name="O'Shea E.K."/>
            <person name="Weissman J.S."/>
        </authorList>
    </citation>
    <scope>LEVEL OF PROTEIN EXPRESSION [LARGE SCALE ANALYSIS]</scope>
</reference>
<reference key="14">
    <citation type="journal article" date="2009" name="Science">
        <title>Global analysis of Cdk1 substrate phosphorylation sites provides insights into evolution.</title>
        <authorList>
            <person name="Holt L.J."/>
            <person name="Tuch B.B."/>
            <person name="Villen J."/>
            <person name="Johnson A.D."/>
            <person name="Gygi S.P."/>
            <person name="Morgan D.O."/>
        </authorList>
    </citation>
    <scope>IDENTIFICATION BY MASS SPECTROMETRY [LARGE SCALE ANALYSIS]</scope>
</reference>
<protein>
    <recommendedName>
        <fullName>Transcriptional activator HAC1</fullName>
    </recommendedName>
</protein>
<feature type="chain" id="PRO_0000076518" description="Transcriptional activator HAC1">
    <location>
        <begin position="1"/>
        <end position="238"/>
    </location>
</feature>
<feature type="domain" description="bZIP">
    <location>
        <begin position="39"/>
        <end position="102"/>
    </location>
</feature>
<feature type="region of interest" description="Disordered" evidence="2">
    <location>
        <begin position="1"/>
        <end position="39"/>
    </location>
</feature>
<feature type="region of interest" description="Basic motif" evidence="1">
    <location>
        <begin position="41"/>
        <end position="61"/>
    </location>
</feature>
<feature type="region of interest" description="Leucine-zipper" evidence="1">
    <location>
        <begin position="67"/>
        <end position="74"/>
    </location>
</feature>
<feature type="region of interest" description="Disordered" evidence="2">
    <location>
        <begin position="115"/>
        <end position="152"/>
    </location>
</feature>
<feature type="compositionally biased region" description="Polar residues" evidence="2">
    <location>
        <begin position="7"/>
        <end position="24"/>
    </location>
</feature>
<feature type="compositionally biased region" description="Low complexity" evidence="2">
    <location>
        <begin position="117"/>
        <end position="134"/>
    </location>
</feature>
<feature type="splice variant" id="VSP_020905" description="In isoform U." evidence="7">
    <original>EAQSGLNSFELNDFFITS</original>
    <variation>AVITMTRKLQ</variation>
    <location>
        <begin position="221"/>
        <end position="238"/>
    </location>
</feature>
<feature type="sequence conflict" description="In Ref. 1; BAA05513." evidence="7" ref="1">
    <original>D</original>
    <variation>Y</variation>
    <location>
        <position position="181"/>
    </location>
</feature>
<organism>
    <name type="scientific">Saccharomyces cerevisiae (strain ATCC 204508 / S288c)</name>
    <name type="common">Baker's yeast</name>
    <dbReference type="NCBI Taxonomy" id="559292"/>
    <lineage>
        <taxon>Eukaryota</taxon>
        <taxon>Fungi</taxon>
        <taxon>Dikarya</taxon>
        <taxon>Ascomycota</taxon>
        <taxon>Saccharomycotina</taxon>
        <taxon>Saccharomycetes</taxon>
        <taxon>Saccharomycetales</taxon>
        <taxon>Saccharomycetaceae</taxon>
        <taxon>Saccharomyces</taxon>
    </lineage>
</organism>
<keyword id="KW-0010">Activator</keyword>
<keyword id="KW-0025">Alternative splicing</keyword>
<keyword id="KW-0238">DNA-binding</keyword>
<keyword id="KW-0539">Nucleus</keyword>
<keyword id="KW-1185">Reference proteome</keyword>
<keyword id="KW-0804">Transcription</keyword>
<keyword id="KW-0805">Transcription regulation</keyword>
<keyword id="KW-0834">Unfolded protein response</keyword>
<gene>
    <name type="primary">HAC1</name>
    <name type="synonym">ERN4</name>
    <name type="synonym">IRE15</name>
    <name type="synonym">IRE2</name>
    <name type="ordered locus">YFL031W</name>
</gene>
<name>HAC1_YEAST</name>
<accession>P41546</accession>
<accession>D6VTJ9</accession>
<accession>P87040</accession>